<evidence type="ECO:0000250" key="1"/>
<evidence type="ECO:0000255" key="2"/>
<evidence type="ECO:0000305" key="3"/>
<proteinExistence type="inferred from homology"/>
<accession>Q5ARL6</accession>
<accession>C8VH83</accession>
<organism>
    <name type="scientific">Emericella nidulans (strain FGSC A4 / ATCC 38163 / CBS 112.46 / NRRL 194 / M139)</name>
    <name type="common">Aspergillus nidulans</name>
    <dbReference type="NCBI Taxonomy" id="227321"/>
    <lineage>
        <taxon>Eukaryota</taxon>
        <taxon>Fungi</taxon>
        <taxon>Dikarya</taxon>
        <taxon>Ascomycota</taxon>
        <taxon>Pezizomycotina</taxon>
        <taxon>Eurotiomycetes</taxon>
        <taxon>Eurotiomycetidae</taxon>
        <taxon>Eurotiales</taxon>
        <taxon>Aspergillaceae</taxon>
        <taxon>Aspergillus</taxon>
        <taxon>Aspergillus subgen. Nidulantes</taxon>
    </lineage>
</organism>
<gene>
    <name type="primary">xdhA</name>
    <name type="ORF">AN9064</name>
</gene>
<comment type="function">
    <text evidence="1">Xylitol dehydrogenase which catalyzes the conversion of xylitol to D-xylulose. Xylose is a major component of hemicelluloses such as xylan. Most fungi utilize D-xylose via three enzymatic reactions, xylose reductase (XR), xylitol dehydrogenase (XDH), and xylulokinase, to form xylulose 5-phosphate, which enters pentose phosphate pathway (By similarity).</text>
</comment>
<comment type="catalytic activity">
    <reaction>
        <text>xylitol + NAD(+) = D-xylulose + NADH + H(+)</text>
        <dbReference type="Rhea" id="RHEA:20433"/>
        <dbReference type="ChEBI" id="CHEBI:15378"/>
        <dbReference type="ChEBI" id="CHEBI:17140"/>
        <dbReference type="ChEBI" id="CHEBI:17151"/>
        <dbReference type="ChEBI" id="CHEBI:57540"/>
        <dbReference type="ChEBI" id="CHEBI:57945"/>
        <dbReference type="EC" id="1.1.1.9"/>
    </reaction>
</comment>
<comment type="cofactor">
    <cofactor evidence="1">
        <name>Zn(2+)</name>
        <dbReference type="ChEBI" id="CHEBI:29105"/>
    </cofactor>
    <text evidence="1">Binds 1 zinc ion per subunit.</text>
</comment>
<comment type="pathway">
    <text>Carbohydrate degradation; L-arabinose degradation via L-arabinitol; D-xylulose 5-phosphate from L-arabinose (fungal route): step 4/5.</text>
</comment>
<comment type="similarity">
    <text evidence="3">Belongs to the zinc-containing alcohol dehydrogenase family.</text>
</comment>
<dbReference type="EC" id="1.1.1.9"/>
<dbReference type="EMBL" id="AACD01000169">
    <property type="protein sequence ID" value="EAA61897.1"/>
    <property type="molecule type" value="Genomic_DNA"/>
</dbReference>
<dbReference type="EMBL" id="BN001306">
    <property type="protein sequence ID" value="CBF82620.1"/>
    <property type="molecule type" value="Genomic_DNA"/>
</dbReference>
<dbReference type="RefSeq" id="XP_682333.1">
    <property type="nucleotide sequence ID" value="XM_677241.1"/>
</dbReference>
<dbReference type="SMR" id="Q5ARL6"/>
<dbReference type="FunCoup" id="Q5ARL6">
    <property type="interactions" value="525"/>
</dbReference>
<dbReference type="STRING" id="227321.Q5ARL6"/>
<dbReference type="EnsemblFungi" id="CBF82620">
    <property type="protein sequence ID" value="CBF82620"/>
    <property type="gene ID" value="ANIA_09064"/>
</dbReference>
<dbReference type="KEGG" id="ani:ANIA_09064"/>
<dbReference type="VEuPathDB" id="FungiDB:AN9064"/>
<dbReference type="eggNOG" id="KOG0024">
    <property type="taxonomic scope" value="Eukaryota"/>
</dbReference>
<dbReference type="HOGENOM" id="CLU_026673_11_5_1"/>
<dbReference type="InParanoid" id="Q5ARL6"/>
<dbReference type="OMA" id="FETWYAM"/>
<dbReference type="OrthoDB" id="3941538at2759"/>
<dbReference type="UniPathway" id="UPA00146">
    <property type="reaction ID" value="UER00577"/>
</dbReference>
<dbReference type="Proteomes" id="UP000000560">
    <property type="component" value="Chromosome VI"/>
</dbReference>
<dbReference type="GO" id="GO:0046526">
    <property type="term" value="F:D-xylulose reductase activity"/>
    <property type="evidence" value="ECO:0007669"/>
    <property type="project" value="UniProtKB-EC"/>
</dbReference>
<dbReference type="GO" id="GO:0003939">
    <property type="term" value="F:L-iditol 2-dehydrogenase (NAD+) activity"/>
    <property type="evidence" value="ECO:0000318"/>
    <property type="project" value="GO_Central"/>
</dbReference>
<dbReference type="GO" id="GO:0008270">
    <property type="term" value="F:zinc ion binding"/>
    <property type="evidence" value="ECO:0007669"/>
    <property type="project" value="InterPro"/>
</dbReference>
<dbReference type="GO" id="GO:0042732">
    <property type="term" value="P:D-xylose metabolic process"/>
    <property type="evidence" value="ECO:0007669"/>
    <property type="project" value="UniProtKB-KW"/>
</dbReference>
<dbReference type="GO" id="GO:0019569">
    <property type="term" value="P:L-arabinose catabolic process to xylulose 5-phosphate"/>
    <property type="evidence" value="ECO:0007669"/>
    <property type="project" value="UniProtKB-UniPathway"/>
</dbReference>
<dbReference type="GO" id="GO:0006062">
    <property type="term" value="P:sorbitol catabolic process"/>
    <property type="evidence" value="ECO:0000318"/>
    <property type="project" value="GO_Central"/>
</dbReference>
<dbReference type="CDD" id="cd05285">
    <property type="entry name" value="sorbitol_DH"/>
    <property type="match status" value="1"/>
</dbReference>
<dbReference type="FunFam" id="3.40.50.720:FF:000068">
    <property type="entry name" value="Sorbitol dehydrogenase"/>
    <property type="match status" value="1"/>
</dbReference>
<dbReference type="Gene3D" id="3.90.180.10">
    <property type="entry name" value="Medium-chain alcohol dehydrogenases, catalytic domain"/>
    <property type="match status" value="1"/>
</dbReference>
<dbReference type="Gene3D" id="3.40.50.720">
    <property type="entry name" value="NAD(P)-binding Rossmann-like Domain"/>
    <property type="match status" value="1"/>
</dbReference>
<dbReference type="InterPro" id="IPR013149">
    <property type="entry name" value="ADH-like_C"/>
</dbReference>
<dbReference type="InterPro" id="IPR013154">
    <property type="entry name" value="ADH-like_N"/>
</dbReference>
<dbReference type="InterPro" id="IPR002328">
    <property type="entry name" value="ADH_Zn_CS"/>
</dbReference>
<dbReference type="InterPro" id="IPR011032">
    <property type="entry name" value="GroES-like_sf"/>
</dbReference>
<dbReference type="InterPro" id="IPR036291">
    <property type="entry name" value="NAD(P)-bd_dom_sf"/>
</dbReference>
<dbReference type="InterPro" id="IPR020843">
    <property type="entry name" value="PKS_ER"/>
</dbReference>
<dbReference type="InterPro" id="IPR045306">
    <property type="entry name" value="SDH-like"/>
</dbReference>
<dbReference type="PANTHER" id="PTHR43161">
    <property type="entry name" value="SORBITOL DEHYDROGENASE"/>
    <property type="match status" value="1"/>
</dbReference>
<dbReference type="PANTHER" id="PTHR43161:SF9">
    <property type="entry name" value="SORBITOL DEHYDROGENASE"/>
    <property type="match status" value="1"/>
</dbReference>
<dbReference type="Pfam" id="PF08240">
    <property type="entry name" value="ADH_N"/>
    <property type="match status" value="1"/>
</dbReference>
<dbReference type="Pfam" id="PF00107">
    <property type="entry name" value="ADH_zinc_N"/>
    <property type="match status" value="1"/>
</dbReference>
<dbReference type="SMART" id="SM00829">
    <property type="entry name" value="PKS_ER"/>
    <property type="match status" value="1"/>
</dbReference>
<dbReference type="SUPFAM" id="SSF50129">
    <property type="entry name" value="GroES-like"/>
    <property type="match status" value="1"/>
</dbReference>
<dbReference type="SUPFAM" id="SSF51735">
    <property type="entry name" value="NAD(P)-binding Rossmann-fold domains"/>
    <property type="match status" value="1"/>
</dbReference>
<dbReference type="PROSITE" id="PS00059">
    <property type="entry name" value="ADH_ZINC"/>
    <property type="match status" value="1"/>
</dbReference>
<reference key="1">
    <citation type="journal article" date="2005" name="Nature">
        <title>Sequencing of Aspergillus nidulans and comparative analysis with A. fumigatus and A. oryzae.</title>
        <authorList>
            <person name="Galagan J.E."/>
            <person name="Calvo S.E."/>
            <person name="Cuomo C."/>
            <person name="Ma L.-J."/>
            <person name="Wortman J.R."/>
            <person name="Batzoglou S."/>
            <person name="Lee S.-I."/>
            <person name="Bastuerkmen M."/>
            <person name="Spevak C.C."/>
            <person name="Clutterbuck J."/>
            <person name="Kapitonov V."/>
            <person name="Jurka J."/>
            <person name="Scazzocchio C."/>
            <person name="Farman M.L."/>
            <person name="Butler J."/>
            <person name="Purcell S."/>
            <person name="Harris S."/>
            <person name="Braus G.H."/>
            <person name="Draht O."/>
            <person name="Busch S."/>
            <person name="D'Enfert C."/>
            <person name="Bouchier C."/>
            <person name="Goldman G.H."/>
            <person name="Bell-Pedersen D."/>
            <person name="Griffiths-Jones S."/>
            <person name="Doonan J.H."/>
            <person name="Yu J."/>
            <person name="Vienken K."/>
            <person name="Pain A."/>
            <person name="Freitag M."/>
            <person name="Selker E.U."/>
            <person name="Archer D.B."/>
            <person name="Penalva M.A."/>
            <person name="Oakley B.R."/>
            <person name="Momany M."/>
            <person name="Tanaka T."/>
            <person name="Kumagai T."/>
            <person name="Asai K."/>
            <person name="Machida M."/>
            <person name="Nierman W.C."/>
            <person name="Denning D.W."/>
            <person name="Caddick M.X."/>
            <person name="Hynes M."/>
            <person name="Paoletti M."/>
            <person name="Fischer R."/>
            <person name="Miller B.L."/>
            <person name="Dyer P.S."/>
            <person name="Sachs M.S."/>
            <person name="Osmani S.A."/>
            <person name="Birren B.W."/>
        </authorList>
    </citation>
    <scope>NUCLEOTIDE SEQUENCE [LARGE SCALE GENOMIC DNA]</scope>
    <source>
        <strain>FGSC A4 / ATCC 38163 / CBS 112.46 / NRRL 194 / M139</strain>
    </source>
</reference>
<reference key="2">
    <citation type="journal article" date="2009" name="Fungal Genet. Biol.">
        <title>The 2008 update of the Aspergillus nidulans genome annotation: a community effort.</title>
        <authorList>
            <person name="Wortman J.R."/>
            <person name="Gilsenan J.M."/>
            <person name="Joardar V."/>
            <person name="Deegan J."/>
            <person name="Clutterbuck J."/>
            <person name="Andersen M.R."/>
            <person name="Archer D."/>
            <person name="Bencina M."/>
            <person name="Braus G."/>
            <person name="Coutinho P."/>
            <person name="von Dohren H."/>
            <person name="Doonan J."/>
            <person name="Driessen A.J."/>
            <person name="Durek P."/>
            <person name="Espeso E."/>
            <person name="Fekete E."/>
            <person name="Flipphi M."/>
            <person name="Estrada C.G."/>
            <person name="Geysens S."/>
            <person name="Goldman G."/>
            <person name="de Groot P.W."/>
            <person name="Hansen K."/>
            <person name="Harris S.D."/>
            <person name="Heinekamp T."/>
            <person name="Helmstaedt K."/>
            <person name="Henrissat B."/>
            <person name="Hofmann G."/>
            <person name="Homan T."/>
            <person name="Horio T."/>
            <person name="Horiuchi H."/>
            <person name="James S."/>
            <person name="Jones M."/>
            <person name="Karaffa L."/>
            <person name="Karanyi Z."/>
            <person name="Kato M."/>
            <person name="Keller N."/>
            <person name="Kelly D.E."/>
            <person name="Kiel J.A."/>
            <person name="Kim J.M."/>
            <person name="van der Klei I.J."/>
            <person name="Klis F.M."/>
            <person name="Kovalchuk A."/>
            <person name="Krasevec N."/>
            <person name="Kubicek C.P."/>
            <person name="Liu B."/>
            <person name="Maccabe A."/>
            <person name="Meyer V."/>
            <person name="Mirabito P."/>
            <person name="Miskei M."/>
            <person name="Mos M."/>
            <person name="Mullins J."/>
            <person name="Nelson D.R."/>
            <person name="Nielsen J."/>
            <person name="Oakley B.R."/>
            <person name="Osmani S.A."/>
            <person name="Pakula T."/>
            <person name="Paszewski A."/>
            <person name="Paulsen I."/>
            <person name="Pilsyk S."/>
            <person name="Pocsi I."/>
            <person name="Punt P.J."/>
            <person name="Ram A.F."/>
            <person name="Ren Q."/>
            <person name="Robellet X."/>
            <person name="Robson G."/>
            <person name="Seiboth B."/>
            <person name="van Solingen P."/>
            <person name="Specht T."/>
            <person name="Sun J."/>
            <person name="Taheri-Talesh N."/>
            <person name="Takeshita N."/>
            <person name="Ussery D."/>
            <person name="vanKuyk P.A."/>
            <person name="Visser H."/>
            <person name="van de Vondervoort P.J."/>
            <person name="de Vries R.P."/>
            <person name="Walton J."/>
            <person name="Xiang X."/>
            <person name="Xiong Y."/>
            <person name="Zeng A.P."/>
            <person name="Brandt B.W."/>
            <person name="Cornell M.J."/>
            <person name="van den Hondel C.A."/>
            <person name="Visser J."/>
            <person name="Oliver S.G."/>
            <person name="Turner G."/>
        </authorList>
    </citation>
    <scope>GENOME REANNOTATION</scope>
    <source>
        <strain>FGSC A4 / ATCC 38163 / CBS 112.46 / NRRL 194 / M139</strain>
    </source>
</reference>
<sequence length="359" mass="38175">MSSQTPTAQNLSFVLEGIHRVKFEDRPIPKLKSPHDVIVNVKYTGICGSDVHYWDHGAIGQFVVKEPMVLGHESSGIVTQIGSAVTSLKVGDHVAMEPGIPCRRCEPCKAGKYNLCEKMAFAATPPYDGTLAKYYTLPEDFCYKLPESISLPEGALMEPLGVAVHIVRQANVTPGQTVVVFGAGPVGLLCCAVAKAFGAIRIIAVDIQKPRLDFAKKFAATATFEPSKAPATENATRMIAENDLGRGADVAIDASGVEPSVHTGIHVLRPGGTYVQGGMGRSEMNFPIMAACTKELNIKGSFRYGSGDYKLAVQLVASGQINVKELITGIVKFEDAEQAFKDVKTGKGIKTLIAGPGAA</sequence>
<name>XYL2_EMENI</name>
<keyword id="KW-0119">Carbohydrate metabolism</keyword>
<keyword id="KW-0479">Metal-binding</keyword>
<keyword id="KW-0520">NAD</keyword>
<keyword id="KW-0560">Oxidoreductase</keyword>
<keyword id="KW-1185">Reference proteome</keyword>
<keyword id="KW-0859">Xylose metabolism</keyword>
<keyword id="KW-0862">Zinc</keyword>
<protein>
    <recommendedName>
        <fullName>Probable D-xylulose reductase A</fullName>
        <ecNumber>1.1.1.9</ecNumber>
    </recommendedName>
    <alternativeName>
        <fullName>Xylitol dehydrogenase A</fullName>
    </alternativeName>
</protein>
<feature type="chain" id="PRO_0000393513" description="Probable D-xylulose reductase A">
    <location>
        <begin position="1"/>
        <end position="359"/>
    </location>
</feature>
<feature type="binding site" evidence="1">
    <location>
        <position position="47"/>
    </location>
    <ligand>
        <name>Zn(2+)</name>
        <dbReference type="ChEBI" id="CHEBI:29105"/>
        <note>catalytic</note>
    </ligand>
</feature>
<feature type="binding site" evidence="1">
    <location>
        <position position="72"/>
    </location>
    <ligand>
        <name>Zn(2+)</name>
        <dbReference type="ChEBI" id="CHEBI:29105"/>
        <note>catalytic</note>
    </ligand>
</feature>
<feature type="binding site" evidence="1">
    <location>
        <position position="73"/>
    </location>
    <ligand>
        <name>Zn(2+)</name>
        <dbReference type="ChEBI" id="CHEBI:29105"/>
        <note>catalytic</note>
    </ligand>
</feature>
<feature type="binding site" evidence="2">
    <location>
        <begin position="182"/>
        <end position="187"/>
    </location>
    <ligand>
        <name>NAD(+)</name>
        <dbReference type="ChEBI" id="CHEBI:57540"/>
    </ligand>
</feature>